<dbReference type="EC" id="5.4.2.11" evidence="1"/>
<dbReference type="EMBL" id="AL766847">
    <property type="protein sequence ID" value="CAD46428.1"/>
    <property type="molecule type" value="Genomic_DNA"/>
</dbReference>
<dbReference type="RefSeq" id="WP_000240135.1">
    <property type="nucleotide sequence ID" value="NC_004368.1"/>
</dbReference>
<dbReference type="SMR" id="Q8E643"/>
<dbReference type="KEGG" id="san:gbs0784"/>
<dbReference type="eggNOG" id="COG0588">
    <property type="taxonomic scope" value="Bacteria"/>
</dbReference>
<dbReference type="HOGENOM" id="CLU_033323_1_5_9"/>
<dbReference type="UniPathway" id="UPA00109">
    <property type="reaction ID" value="UER00186"/>
</dbReference>
<dbReference type="Proteomes" id="UP000000823">
    <property type="component" value="Chromosome"/>
</dbReference>
<dbReference type="GO" id="GO:0004619">
    <property type="term" value="F:phosphoglycerate mutase activity"/>
    <property type="evidence" value="ECO:0007669"/>
    <property type="project" value="UniProtKB-EC"/>
</dbReference>
<dbReference type="GO" id="GO:0006094">
    <property type="term" value="P:gluconeogenesis"/>
    <property type="evidence" value="ECO:0007669"/>
    <property type="project" value="UniProtKB-UniRule"/>
</dbReference>
<dbReference type="GO" id="GO:0006096">
    <property type="term" value="P:glycolytic process"/>
    <property type="evidence" value="ECO:0007669"/>
    <property type="project" value="UniProtKB-UniRule"/>
</dbReference>
<dbReference type="CDD" id="cd07067">
    <property type="entry name" value="HP_PGM_like"/>
    <property type="match status" value="1"/>
</dbReference>
<dbReference type="FunFam" id="3.40.50.1240:FF:000003">
    <property type="entry name" value="2,3-bisphosphoglycerate-dependent phosphoglycerate mutase"/>
    <property type="match status" value="1"/>
</dbReference>
<dbReference type="Gene3D" id="3.40.50.1240">
    <property type="entry name" value="Phosphoglycerate mutase-like"/>
    <property type="match status" value="1"/>
</dbReference>
<dbReference type="HAMAP" id="MF_01039">
    <property type="entry name" value="PGAM_GpmA"/>
    <property type="match status" value="1"/>
</dbReference>
<dbReference type="InterPro" id="IPR013078">
    <property type="entry name" value="His_Pase_superF_clade-1"/>
</dbReference>
<dbReference type="InterPro" id="IPR029033">
    <property type="entry name" value="His_PPase_superfam"/>
</dbReference>
<dbReference type="InterPro" id="IPR005952">
    <property type="entry name" value="Phosphogly_mut1"/>
</dbReference>
<dbReference type="NCBIfam" id="TIGR01258">
    <property type="entry name" value="pgm_1"/>
    <property type="match status" value="1"/>
</dbReference>
<dbReference type="NCBIfam" id="NF010713">
    <property type="entry name" value="PRK14115.1"/>
    <property type="match status" value="1"/>
</dbReference>
<dbReference type="NCBIfam" id="NF010715">
    <property type="entry name" value="PRK14117.1"/>
    <property type="match status" value="1"/>
</dbReference>
<dbReference type="PANTHER" id="PTHR11931">
    <property type="entry name" value="PHOSPHOGLYCERATE MUTASE"/>
    <property type="match status" value="1"/>
</dbReference>
<dbReference type="Pfam" id="PF00300">
    <property type="entry name" value="His_Phos_1"/>
    <property type="match status" value="1"/>
</dbReference>
<dbReference type="PIRSF" id="PIRSF000709">
    <property type="entry name" value="6PFK_2-Ptase"/>
    <property type="match status" value="1"/>
</dbReference>
<dbReference type="SMART" id="SM00855">
    <property type="entry name" value="PGAM"/>
    <property type="match status" value="1"/>
</dbReference>
<dbReference type="SUPFAM" id="SSF53254">
    <property type="entry name" value="Phosphoglycerate mutase-like"/>
    <property type="match status" value="1"/>
</dbReference>
<keyword id="KW-0312">Gluconeogenesis</keyword>
<keyword id="KW-0324">Glycolysis</keyword>
<keyword id="KW-0413">Isomerase</keyword>
<feature type="chain" id="PRO_0000179920" description="2,3-bisphosphoglycerate-dependent phosphoglycerate mutase">
    <location>
        <begin position="1"/>
        <end position="230"/>
    </location>
</feature>
<feature type="active site" description="Tele-phosphohistidine intermediate" evidence="1">
    <location>
        <position position="9"/>
    </location>
</feature>
<feature type="active site" description="Proton donor/acceptor" evidence="1">
    <location>
        <position position="87"/>
    </location>
</feature>
<feature type="binding site" evidence="1">
    <location>
        <begin position="8"/>
        <end position="15"/>
    </location>
    <ligand>
        <name>substrate</name>
    </ligand>
</feature>
<feature type="binding site" evidence="1">
    <location>
        <begin position="21"/>
        <end position="22"/>
    </location>
    <ligand>
        <name>substrate</name>
    </ligand>
</feature>
<feature type="binding site" evidence="1">
    <location>
        <position position="60"/>
    </location>
    <ligand>
        <name>substrate</name>
    </ligand>
</feature>
<feature type="binding site" evidence="1">
    <location>
        <begin position="87"/>
        <end position="90"/>
    </location>
    <ligand>
        <name>substrate</name>
    </ligand>
</feature>
<feature type="binding site" evidence="1">
    <location>
        <position position="98"/>
    </location>
    <ligand>
        <name>substrate</name>
    </ligand>
</feature>
<feature type="binding site" evidence="1">
    <location>
        <begin position="114"/>
        <end position="115"/>
    </location>
    <ligand>
        <name>substrate</name>
    </ligand>
</feature>
<feature type="binding site" evidence="1">
    <location>
        <begin position="183"/>
        <end position="184"/>
    </location>
    <ligand>
        <name>substrate</name>
    </ligand>
</feature>
<feature type="site" description="Transition state stabilizer" evidence="1">
    <location>
        <position position="182"/>
    </location>
</feature>
<reference key="1">
    <citation type="journal article" date="2002" name="Mol. Microbiol.">
        <title>Genome sequence of Streptococcus agalactiae, a pathogen causing invasive neonatal disease.</title>
        <authorList>
            <person name="Glaser P."/>
            <person name="Rusniok C."/>
            <person name="Buchrieser C."/>
            <person name="Chevalier F."/>
            <person name="Frangeul L."/>
            <person name="Msadek T."/>
            <person name="Zouine M."/>
            <person name="Couve E."/>
            <person name="Lalioui L."/>
            <person name="Poyart C."/>
            <person name="Trieu-Cuot P."/>
            <person name="Kunst F."/>
        </authorList>
    </citation>
    <scope>NUCLEOTIDE SEQUENCE [LARGE SCALE GENOMIC DNA]</scope>
    <source>
        <strain>NEM316</strain>
    </source>
</reference>
<gene>
    <name evidence="1" type="primary">gpmA</name>
    <name type="ordered locus">gbs0784</name>
</gene>
<protein>
    <recommendedName>
        <fullName evidence="1">2,3-bisphosphoglycerate-dependent phosphoglycerate mutase</fullName>
        <shortName evidence="1">BPG-dependent PGAM</shortName>
        <shortName evidence="1">PGAM</shortName>
        <shortName evidence="1">Phosphoglyceromutase</shortName>
        <shortName evidence="1">dPGM</shortName>
        <ecNumber evidence="1">5.4.2.11</ecNumber>
    </recommendedName>
</protein>
<proteinExistence type="inferred from homology"/>
<comment type="function">
    <text evidence="1">Catalyzes the interconversion of 2-phosphoglycerate and 3-phosphoglycerate.</text>
</comment>
<comment type="catalytic activity">
    <reaction evidence="1">
        <text>(2R)-2-phosphoglycerate = (2R)-3-phosphoglycerate</text>
        <dbReference type="Rhea" id="RHEA:15901"/>
        <dbReference type="ChEBI" id="CHEBI:58272"/>
        <dbReference type="ChEBI" id="CHEBI:58289"/>
        <dbReference type="EC" id="5.4.2.11"/>
    </reaction>
</comment>
<comment type="pathway">
    <text evidence="1">Carbohydrate degradation; glycolysis; pyruvate from D-glyceraldehyde 3-phosphate: step 3/5.</text>
</comment>
<comment type="similarity">
    <text evidence="1">Belongs to the phosphoglycerate mutase family. BPG-dependent PGAM subfamily.</text>
</comment>
<accession>Q8E643</accession>
<sequence length="230" mass="25960">MVKLVFARHGESEWNKANLFTGWADVDLSEKGTQQAIDAGKLIQAAGIEFDLAFTSVLKRAIKTTNLALEAADQLWVPVEKSWRLNERHYGGLTGKNKAEAAEQFGDEQVHIWRRSYDVLPPDMAKDDEHSAHTDRRYASLDDSVIPDAENLKVTLERALPFWEDKIAPALKDGKNVFVGAHGNSIRALVKHIKQLSDDEIMDVEIPNFPPLVFEFDEKLNLVSEYYLGK</sequence>
<evidence type="ECO:0000255" key="1">
    <source>
        <dbReference type="HAMAP-Rule" id="MF_01039"/>
    </source>
</evidence>
<name>GPMA_STRA3</name>
<organism>
    <name type="scientific">Streptococcus agalactiae serotype III (strain NEM316)</name>
    <dbReference type="NCBI Taxonomy" id="211110"/>
    <lineage>
        <taxon>Bacteria</taxon>
        <taxon>Bacillati</taxon>
        <taxon>Bacillota</taxon>
        <taxon>Bacilli</taxon>
        <taxon>Lactobacillales</taxon>
        <taxon>Streptococcaceae</taxon>
        <taxon>Streptococcus</taxon>
    </lineage>
</organism>